<name>RL16_GEOSL</name>
<proteinExistence type="inferred from homology"/>
<organism>
    <name type="scientific">Geobacter sulfurreducens (strain ATCC 51573 / DSM 12127 / PCA)</name>
    <dbReference type="NCBI Taxonomy" id="243231"/>
    <lineage>
        <taxon>Bacteria</taxon>
        <taxon>Pseudomonadati</taxon>
        <taxon>Thermodesulfobacteriota</taxon>
        <taxon>Desulfuromonadia</taxon>
        <taxon>Geobacterales</taxon>
        <taxon>Geobacteraceae</taxon>
        <taxon>Geobacter</taxon>
    </lineage>
</organism>
<protein>
    <recommendedName>
        <fullName evidence="1">Large ribosomal subunit protein uL16</fullName>
    </recommendedName>
    <alternativeName>
        <fullName evidence="3">50S ribosomal protein L16</fullName>
    </alternativeName>
</protein>
<gene>
    <name evidence="1" type="primary">rplP</name>
    <name type="ordered locus">GSU2850</name>
</gene>
<comment type="function">
    <text evidence="1">Binds 23S rRNA and is also seen to make contacts with the A and possibly P site tRNAs.</text>
</comment>
<comment type="subunit">
    <text evidence="1">Part of the 50S ribosomal subunit.</text>
</comment>
<comment type="similarity">
    <text evidence="1">Belongs to the universal ribosomal protein uL16 family.</text>
</comment>
<dbReference type="EMBL" id="AE017180">
    <property type="protein sequence ID" value="AAR36243.1"/>
    <property type="molecule type" value="Genomic_DNA"/>
</dbReference>
<dbReference type="RefSeq" id="NP_953893.1">
    <property type="nucleotide sequence ID" value="NC_002939.5"/>
</dbReference>
<dbReference type="RefSeq" id="WP_010943479.1">
    <property type="nucleotide sequence ID" value="NC_002939.5"/>
</dbReference>
<dbReference type="SMR" id="Q748Z5"/>
<dbReference type="FunCoup" id="Q748Z5">
    <property type="interactions" value="584"/>
</dbReference>
<dbReference type="STRING" id="243231.GSU2850"/>
<dbReference type="EnsemblBacteria" id="AAR36243">
    <property type="protein sequence ID" value="AAR36243"/>
    <property type="gene ID" value="GSU2850"/>
</dbReference>
<dbReference type="KEGG" id="gsu:GSU2850"/>
<dbReference type="PATRIC" id="fig|243231.5.peg.2876"/>
<dbReference type="eggNOG" id="COG0197">
    <property type="taxonomic scope" value="Bacteria"/>
</dbReference>
<dbReference type="HOGENOM" id="CLU_078858_2_1_7"/>
<dbReference type="InParanoid" id="Q748Z5"/>
<dbReference type="OrthoDB" id="9802589at2"/>
<dbReference type="Proteomes" id="UP000000577">
    <property type="component" value="Chromosome"/>
</dbReference>
<dbReference type="GO" id="GO:0022625">
    <property type="term" value="C:cytosolic large ribosomal subunit"/>
    <property type="evidence" value="ECO:0000318"/>
    <property type="project" value="GO_Central"/>
</dbReference>
<dbReference type="GO" id="GO:0019843">
    <property type="term" value="F:rRNA binding"/>
    <property type="evidence" value="ECO:0000318"/>
    <property type="project" value="GO_Central"/>
</dbReference>
<dbReference type="GO" id="GO:0003735">
    <property type="term" value="F:structural constituent of ribosome"/>
    <property type="evidence" value="ECO:0000318"/>
    <property type="project" value="GO_Central"/>
</dbReference>
<dbReference type="GO" id="GO:0000049">
    <property type="term" value="F:tRNA binding"/>
    <property type="evidence" value="ECO:0007669"/>
    <property type="project" value="UniProtKB-KW"/>
</dbReference>
<dbReference type="GO" id="GO:0006412">
    <property type="term" value="P:translation"/>
    <property type="evidence" value="ECO:0007669"/>
    <property type="project" value="UniProtKB-UniRule"/>
</dbReference>
<dbReference type="CDD" id="cd01433">
    <property type="entry name" value="Ribosomal_L16_L10e"/>
    <property type="match status" value="1"/>
</dbReference>
<dbReference type="FunFam" id="3.90.1170.10:FF:000001">
    <property type="entry name" value="50S ribosomal protein L16"/>
    <property type="match status" value="1"/>
</dbReference>
<dbReference type="Gene3D" id="3.90.1170.10">
    <property type="entry name" value="Ribosomal protein L10e/L16"/>
    <property type="match status" value="1"/>
</dbReference>
<dbReference type="HAMAP" id="MF_01342">
    <property type="entry name" value="Ribosomal_uL16"/>
    <property type="match status" value="1"/>
</dbReference>
<dbReference type="InterPro" id="IPR047873">
    <property type="entry name" value="Ribosomal_uL16"/>
</dbReference>
<dbReference type="InterPro" id="IPR000114">
    <property type="entry name" value="Ribosomal_uL16_bact-type"/>
</dbReference>
<dbReference type="InterPro" id="IPR020798">
    <property type="entry name" value="Ribosomal_uL16_CS"/>
</dbReference>
<dbReference type="InterPro" id="IPR016180">
    <property type="entry name" value="Ribosomal_uL16_dom"/>
</dbReference>
<dbReference type="InterPro" id="IPR036920">
    <property type="entry name" value="Ribosomal_uL16_sf"/>
</dbReference>
<dbReference type="NCBIfam" id="TIGR01164">
    <property type="entry name" value="rplP_bact"/>
    <property type="match status" value="1"/>
</dbReference>
<dbReference type="PANTHER" id="PTHR12220">
    <property type="entry name" value="50S/60S RIBOSOMAL PROTEIN L16"/>
    <property type="match status" value="1"/>
</dbReference>
<dbReference type="PANTHER" id="PTHR12220:SF13">
    <property type="entry name" value="LARGE RIBOSOMAL SUBUNIT PROTEIN UL16M"/>
    <property type="match status" value="1"/>
</dbReference>
<dbReference type="Pfam" id="PF00252">
    <property type="entry name" value="Ribosomal_L16"/>
    <property type="match status" value="1"/>
</dbReference>
<dbReference type="PRINTS" id="PR00060">
    <property type="entry name" value="RIBOSOMALL16"/>
</dbReference>
<dbReference type="SUPFAM" id="SSF54686">
    <property type="entry name" value="Ribosomal protein L16p/L10e"/>
    <property type="match status" value="1"/>
</dbReference>
<dbReference type="PROSITE" id="PS00586">
    <property type="entry name" value="RIBOSOMAL_L16_1"/>
    <property type="match status" value="1"/>
</dbReference>
<dbReference type="PROSITE" id="PS00701">
    <property type="entry name" value="RIBOSOMAL_L16_2"/>
    <property type="match status" value="1"/>
</dbReference>
<sequence length="140" mass="15730">MLMPKRVKHRKQMKGRMKGDAQRGASLAFGEFGLQATECGWVDSRQIEAARIAMTRYIKRGGKIWIRLFPDKPLTSKPAETRMGKGKGSPDSWVCVVKPGKVLYEMEGVTEEIAREAFRLAAHKLPVGTKFISRKDGHES</sequence>
<accession>Q748Z5</accession>
<reference key="1">
    <citation type="journal article" date="2003" name="Science">
        <title>Genome of Geobacter sulfurreducens: metal reduction in subsurface environments.</title>
        <authorList>
            <person name="Methe B.A."/>
            <person name="Nelson K.E."/>
            <person name="Eisen J.A."/>
            <person name="Paulsen I.T."/>
            <person name="Nelson W.C."/>
            <person name="Heidelberg J.F."/>
            <person name="Wu D."/>
            <person name="Wu M."/>
            <person name="Ward N.L."/>
            <person name="Beanan M.J."/>
            <person name="Dodson R.J."/>
            <person name="Madupu R."/>
            <person name="Brinkac L.M."/>
            <person name="Daugherty S.C."/>
            <person name="DeBoy R.T."/>
            <person name="Durkin A.S."/>
            <person name="Gwinn M.L."/>
            <person name="Kolonay J.F."/>
            <person name="Sullivan S.A."/>
            <person name="Haft D.H."/>
            <person name="Selengut J."/>
            <person name="Davidsen T.M."/>
            <person name="Zafar N."/>
            <person name="White O."/>
            <person name="Tran B."/>
            <person name="Romero C."/>
            <person name="Forberger H.A."/>
            <person name="Weidman J.F."/>
            <person name="Khouri H.M."/>
            <person name="Feldblyum T.V."/>
            <person name="Utterback T.R."/>
            <person name="Van Aken S.E."/>
            <person name="Lovley D.R."/>
            <person name="Fraser C.M."/>
        </authorList>
    </citation>
    <scope>NUCLEOTIDE SEQUENCE [LARGE SCALE GENOMIC DNA]</scope>
    <source>
        <strain>ATCC 51573 / DSM 12127 / PCA</strain>
    </source>
</reference>
<feature type="chain" id="PRO_0000062108" description="Large ribosomal subunit protein uL16">
    <location>
        <begin position="1"/>
        <end position="140"/>
    </location>
</feature>
<feature type="region of interest" description="Disordered" evidence="2">
    <location>
        <begin position="1"/>
        <end position="20"/>
    </location>
</feature>
<feature type="compositionally biased region" description="Basic residues" evidence="2">
    <location>
        <begin position="1"/>
        <end position="16"/>
    </location>
</feature>
<keyword id="KW-1185">Reference proteome</keyword>
<keyword id="KW-0687">Ribonucleoprotein</keyword>
<keyword id="KW-0689">Ribosomal protein</keyword>
<keyword id="KW-0694">RNA-binding</keyword>
<keyword id="KW-0699">rRNA-binding</keyword>
<keyword id="KW-0820">tRNA-binding</keyword>
<evidence type="ECO:0000255" key="1">
    <source>
        <dbReference type="HAMAP-Rule" id="MF_01342"/>
    </source>
</evidence>
<evidence type="ECO:0000256" key="2">
    <source>
        <dbReference type="SAM" id="MobiDB-lite"/>
    </source>
</evidence>
<evidence type="ECO:0000305" key="3"/>